<feature type="chain" id="PRO_1000127263" description="Small ribosomal subunit protein eS6">
    <location>
        <begin position="1"/>
        <end position="124"/>
    </location>
</feature>
<evidence type="ECO:0000255" key="1">
    <source>
        <dbReference type="HAMAP-Rule" id="MF_00512"/>
    </source>
</evidence>
<evidence type="ECO:0000305" key="2"/>
<dbReference type="EMBL" id="CP000867">
    <property type="protein sequence ID" value="ABX02278.1"/>
    <property type="molecule type" value="Genomic_DNA"/>
</dbReference>
<dbReference type="SMR" id="A9AAA5"/>
<dbReference type="STRING" id="444158.MmarC6_1465"/>
<dbReference type="KEGG" id="mmx:MmarC6_1465"/>
<dbReference type="eggNOG" id="arCOG01946">
    <property type="taxonomic scope" value="Archaea"/>
</dbReference>
<dbReference type="HOGENOM" id="CLU_109671_1_1_2"/>
<dbReference type="OrthoDB" id="7793at2157"/>
<dbReference type="PhylomeDB" id="A9AAA5"/>
<dbReference type="GO" id="GO:1990904">
    <property type="term" value="C:ribonucleoprotein complex"/>
    <property type="evidence" value="ECO:0007669"/>
    <property type="project" value="UniProtKB-KW"/>
</dbReference>
<dbReference type="GO" id="GO:0005840">
    <property type="term" value="C:ribosome"/>
    <property type="evidence" value="ECO:0007669"/>
    <property type="project" value="UniProtKB-KW"/>
</dbReference>
<dbReference type="GO" id="GO:0003735">
    <property type="term" value="F:structural constituent of ribosome"/>
    <property type="evidence" value="ECO:0007669"/>
    <property type="project" value="InterPro"/>
</dbReference>
<dbReference type="GO" id="GO:0006412">
    <property type="term" value="P:translation"/>
    <property type="evidence" value="ECO:0007669"/>
    <property type="project" value="UniProtKB-UniRule"/>
</dbReference>
<dbReference type="HAMAP" id="MF_00512">
    <property type="entry name" value="Ribosomal_eS6"/>
    <property type="match status" value="1"/>
</dbReference>
<dbReference type="InterPro" id="IPR001377">
    <property type="entry name" value="Ribosomal_eS6"/>
</dbReference>
<dbReference type="InterPro" id="IPR020924">
    <property type="entry name" value="Ribosomal_eS6_arc"/>
</dbReference>
<dbReference type="NCBIfam" id="NF003294">
    <property type="entry name" value="PRK04290.1-3"/>
    <property type="match status" value="1"/>
</dbReference>
<dbReference type="PANTHER" id="PTHR11502">
    <property type="entry name" value="40S RIBOSOMAL PROTEIN S6"/>
    <property type="match status" value="1"/>
</dbReference>
<dbReference type="Pfam" id="PF01092">
    <property type="entry name" value="Ribosomal_S6e"/>
    <property type="match status" value="1"/>
</dbReference>
<dbReference type="SMART" id="SM01405">
    <property type="entry name" value="Ribosomal_S6e"/>
    <property type="match status" value="1"/>
</dbReference>
<protein>
    <recommendedName>
        <fullName evidence="1">Small ribosomal subunit protein eS6</fullName>
    </recommendedName>
    <alternativeName>
        <fullName evidence="2">30S ribosomal protein S6e</fullName>
    </alternativeName>
</protein>
<comment type="similarity">
    <text evidence="1">Belongs to the eukaryotic ribosomal protein eS6 family.</text>
</comment>
<proteinExistence type="inferred from homology"/>
<name>RS6E_METM6</name>
<gene>
    <name evidence="1" type="primary">rps6e</name>
    <name type="ordered locus">MmarC6_1465</name>
</gene>
<sequence length="124" mass="13491">MAFKVVVSDTKSGKSYQFETESTALIGKKIGDEISGSVVELEGYKLKITGGSDKCGFAMRHDIHGAMKMRVLLKNGPGYNVKEKGLRRRKSLRGNTISKDVTLINTKVVEYGPAPLGGEPENTE</sequence>
<organism>
    <name type="scientific">Methanococcus maripaludis (strain C6 / ATCC BAA-1332)</name>
    <dbReference type="NCBI Taxonomy" id="444158"/>
    <lineage>
        <taxon>Archaea</taxon>
        <taxon>Methanobacteriati</taxon>
        <taxon>Methanobacteriota</taxon>
        <taxon>Methanomada group</taxon>
        <taxon>Methanococci</taxon>
        <taxon>Methanococcales</taxon>
        <taxon>Methanococcaceae</taxon>
        <taxon>Methanococcus</taxon>
    </lineage>
</organism>
<reference key="1">
    <citation type="submission" date="2007-10" db="EMBL/GenBank/DDBJ databases">
        <title>Complete sequence of Methanococcus maripaludis C6.</title>
        <authorList>
            <consortium name="US DOE Joint Genome Institute"/>
            <person name="Copeland A."/>
            <person name="Lucas S."/>
            <person name="Lapidus A."/>
            <person name="Barry K."/>
            <person name="Glavina del Rio T."/>
            <person name="Dalin E."/>
            <person name="Tice H."/>
            <person name="Pitluck S."/>
            <person name="Clum A."/>
            <person name="Schmutz J."/>
            <person name="Larimer F."/>
            <person name="Land M."/>
            <person name="Hauser L."/>
            <person name="Kyrpides N."/>
            <person name="Mikhailova N."/>
            <person name="Sieprawska-Lupa M."/>
            <person name="Whitman W.B."/>
            <person name="Richardson P."/>
        </authorList>
    </citation>
    <scope>NUCLEOTIDE SEQUENCE [LARGE SCALE GENOMIC DNA]</scope>
    <source>
        <strain>C6 / ATCC BAA-1332</strain>
    </source>
</reference>
<keyword id="KW-0687">Ribonucleoprotein</keyword>
<keyword id="KW-0689">Ribosomal protein</keyword>
<accession>A9AAA5</accession>